<dbReference type="EMBL" id="CP000305">
    <property type="protein sequence ID" value="ABG16503.1"/>
    <property type="molecule type" value="Genomic_DNA"/>
</dbReference>
<dbReference type="EMBL" id="ACNQ01000001">
    <property type="protein sequence ID" value="EEO78616.1"/>
    <property type="molecule type" value="Genomic_DNA"/>
</dbReference>
<dbReference type="RefSeq" id="WP_002211522.1">
    <property type="nucleotide sequence ID" value="NZ_ACNQ01000001.1"/>
</dbReference>
<dbReference type="SMR" id="Q1CNC7"/>
<dbReference type="GeneID" id="57974914"/>
<dbReference type="KEGG" id="ypn:YPN_0170"/>
<dbReference type="HOGENOM" id="CLU_016047_1_1_6"/>
<dbReference type="Proteomes" id="UP000008936">
    <property type="component" value="Chromosome"/>
</dbReference>
<dbReference type="GO" id="GO:0005886">
    <property type="term" value="C:plasma membrane"/>
    <property type="evidence" value="ECO:0007669"/>
    <property type="project" value="UniProtKB-SubCell"/>
</dbReference>
<dbReference type="GO" id="GO:0055085">
    <property type="term" value="P:transmembrane transport"/>
    <property type="evidence" value="ECO:0007669"/>
    <property type="project" value="InterPro"/>
</dbReference>
<dbReference type="CDD" id="cd06261">
    <property type="entry name" value="TM_PBP2"/>
    <property type="match status" value="1"/>
</dbReference>
<dbReference type="Gene3D" id="1.10.3720.10">
    <property type="entry name" value="MetI-like"/>
    <property type="match status" value="1"/>
</dbReference>
<dbReference type="InterPro" id="IPR000515">
    <property type="entry name" value="MetI-like"/>
</dbReference>
<dbReference type="InterPro" id="IPR035906">
    <property type="entry name" value="MetI-like_sf"/>
</dbReference>
<dbReference type="NCBIfam" id="NF008210">
    <property type="entry name" value="PRK10973.1"/>
    <property type="match status" value="1"/>
</dbReference>
<dbReference type="PANTHER" id="PTHR43744">
    <property type="entry name" value="ABC TRANSPORTER PERMEASE PROTEIN MG189-RELATED-RELATED"/>
    <property type="match status" value="1"/>
</dbReference>
<dbReference type="PANTHER" id="PTHR43744:SF8">
    <property type="entry name" value="SN-GLYCEROL-3-PHOSPHATE TRANSPORT SYSTEM PERMEASE PROTEIN UGPE"/>
    <property type="match status" value="1"/>
</dbReference>
<dbReference type="Pfam" id="PF00528">
    <property type="entry name" value="BPD_transp_1"/>
    <property type="match status" value="1"/>
</dbReference>
<dbReference type="SUPFAM" id="SSF161098">
    <property type="entry name" value="MetI-like"/>
    <property type="match status" value="1"/>
</dbReference>
<dbReference type="PROSITE" id="PS50928">
    <property type="entry name" value="ABC_TM1"/>
    <property type="match status" value="1"/>
</dbReference>
<gene>
    <name type="primary">ugpE</name>
    <name type="ordered locus">YPN_0170</name>
    <name type="ORF">YP516_0135</name>
</gene>
<organism>
    <name type="scientific">Yersinia pestis bv. Antiqua (strain Nepal516)</name>
    <dbReference type="NCBI Taxonomy" id="377628"/>
    <lineage>
        <taxon>Bacteria</taxon>
        <taxon>Pseudomonadati</taxon>
        <taxon>Pseudomonadota</taxon>
        <taxon>Gammaproteobacteria</taxon>
        <taxon>Enterobacterales</taxon>
        <taxon>Yersiniaceae</taxon>
        <taxon>Yersinia</taxon>
    </lineage>
</organism>
<protein>
    <recommendedName>
        <fullName evidence="1">sn-glycerol-3-phosphate transport system permease protein UgpE</fullName>
    </recommendedName>
</protein>
<name>UGPE_YERPN</name>
<feature type="chain" id="PRO_0000292691" description="sn-glycerol-3-phosphate transport system permease protein UgpE">
    <location>
        <begin position="1"/>
        <end position="281"/>
    </location>
</feature>
<feature type="transmembrane region" description="Helical" evidence="3">
    <location>
        <begin position="14"/>
        <end position="34"/>
    </location>
</feature>
<feature type="transmembrane region" description="Helical" evidence="3">
    <location>
        <begin position="85"/>
        <end position="105"/>
    </location>
</feature>
<feature type="transmembrane region" description="Helical" evidence="3">
    <location>
        <begin position="113"/>
        <end position="133"/>
    </location>
</feature>
<feature type="transmembrane region" description="Helical" evidence="3">
    <location>
        <begin position="142"/>
        <end position="162"/>
    </location>
</feature>
<feature type="transmembrane region" description="Helical" evidence="3">
    <location>
        <begin position="201"/>
        <end position="221"/>
    </location>
</feature>
<feature type="transmembrane region" description="Helical" evidence="3">
    <location>
        <begin position="247"/>
        <end position="267"/>
    </location>
</feature>
<feature type="domain" description="ABC transmembrane type-1" evidence="3">
    <location>
        <begin position="77"/>
        <end position="268"/>
    </location>
</feature>
<accession>Q1CNC7</accession>
<accession>D1Q162</accession>
<evidence type="ECO:0000250" key="1">
    <source>
        <dbReference type="UniProtKB" id="P10906"/>
    </source>
</evidence>
<evidence type="ECO:0000255" key="2"/>
<evidence type="ECO:0000255" key="3">
    <source>
        <dbReference type="PROSITE-ProRule" id="PRU00441"/>
    </source>
</evidence>
<evidence type="ECO:0000305" key="4"/>
<keyword id="KW-0997">Cell inner membrane</keyword>
<keyword id="KW-1003">Cell membrane</keyword>
<keyword id="KW-0472">Membrane</keyword>
<keyword id="KW-0812">Transmembrane</keyword>
<keyword id="KW-1133">Transmembrane helix</keyword>
<keyword id="KW-0813">Transport</keyword>
<comment type="function">
    <text evidence="1">Part of the ABC transporter complex UgpBAEC involved in sn-glycerol-3-phosphate (G3P) import. Probably responsible for the translocation of the substrate across the membrane.</text>
</comment>
<comment type="subunit">
    <text evidence="1">The complex is composed of two ATP-binding proteins (UgpC), two transmembrane proteins (UgpA and UgpE) and a solute-binding protein (UgpB).</text>
</comment>
<comment type="subcellular location">
    <subcellularLocation>
        <location evidence="1">Cell inner membrane</location>
        <topology evidence="2">Multi-pass membrane protein</topology>
    </subcellularLocation>
</comment>
<comment type="similarity">
    <text evidence="4">Belongs to the binding-protein-dependent transport system permease family. UgpAE subfamily.</text>
</comment>
<reference key="1">
    <citation type="journal article" date="2006" name="J. Bacteriol.">
        <title>Complete genome sequence of Yersinia pestis strains Antiqua and Nepal516: evidence of gene reduction in an emerging pathogen.</title>
        <authorList>
            <person name="Chain P.S.G."/>
            <person name="Hu P."/>
            <person name="Malfatti S.A."/>
            <person name="Radnedge L."/>
            <person name="Larimer F."/>
            <person name="Vergez L.M."/>
            <person name="Worsham P."/>
            <person name="Chu M.C."/>
            <person name="Andersen G.L."/>
        </authorList>
    </citation>
    <scope>NUCLEOTIDE SEQUENCE [LARGE SCALE GENOMIC DNA]</scope>
    <source>
        <strain>Nepal516</strain>
    </source>
</reference>
<reference key="2">
    <citation type="submission" date="2009-04" db="EMBL/GenBank/DDBJ databases">
        <title>Yersinia pestis Nepal516A whole genome shotgun sequencing project.</title>
        <authorList>
            <person name="Plunkett G. III"/>
            <person name="Anderson B.D."/>
            <person name="Baumler D.J."/>
            <person name="Burland V."/>
            <person name="Cabot E.L."/>
            <person name="Glasner J.D."/>
            <person name="Mau B."/>
            <person name="Neeno-Eckwall E."/>
            <person name="Perna N.T."/>
            <person name="Munk A.C."/>
            <person name="Tapia R."/>
            <person name="Green L.D."/>
            <person name="Rogers Y.C."/>
            <person name="Detter J.C."/>
            <person name="Bruce D.C."/>
            <person name="Brettin T.S."/>
        </authorList>
    </citation>
    <scope>NUCLEOTIDE SEQUENCE [LARGE SCALE GENOMIC DNA]</scope>
    <source>
        <strain>Nepal516</strain>
    </source>
</reference>
<sequence>MIENRRGLDIFCHIMLIIGVLLILFPLYVAFVAASLDDSQVFQAPMTLIPGPHLWQNISHIWHAGVGNNSTPFGLMLLNSFVMAFAITVGKITVSILSAYAIVYFRFPLRNLFFWLIFLTLMLPVEVRIFPTIEVIANLNLLDSYTGLTLPLMASATATFLFRQFFMTLPDELLEAARIDGAGAMRFFWDIVLPLSKTNLAALFVITFIYGWNQYLWPILITSDASMGTAVAGIRSMISTSGAPTQWNQVMAAMILTLIPPVVVVLLMQRWFVRGLVDSEK</sequence>
<proteinExistence type="inferred from homology"/>